<name>YOD1_SCHPO</name>
<protein>
    <recommendedName>
        <fullName>Uncharacterized peptidase C18A7.01</fullName>
        <ecNumber>3.4.-.-</ecNumber>
    </recommendedName>
</protein>
<gene>
    <name type="ORF">SPBC18A7.01</name>
    <name type="ORF">SPBC4F6.19c</name>
</gene>
<accession>Q9UUD8</accession>
<accession>O74403</accession>
<sequence>MVSFESSFERGTDFLNRNFKKCLFACISIFIFALLALSFLSLLQPDTVQRLYQCAVPSMIYVPPMINEAISIQHEEFNNRRRRLSAALREDKLDALIMEPTVSMDYFANITTGSWGLSERPFLGIIFSDDEPYPGDVASRIYFLVPKFELPRAKELVGKNIDAKYITWDEDENPYQVLYDRLGPLKLMIDGTVRNFIAQGLQYAGFTTFGVSPRVASLREIKSPAEVDIMSRVNIATVAAIRSVQPCIKPGITEKELAEVINMLFVYGGLPVQESPIVLFGERAAMPHGGPSNRRLKKSEFVLMDVGTTLFGYHSDCTRTVLPHGQKMTERMEKLWNLVYDAQTAGIQMLSHLSNTSCAEVDLAARKVIKDAGYGEYFIHRLGHGLGLEEHEQTYLNPANKGTPVQKGNVFTVEPGIYIPDEIGIRIEDAVLASDVPILLTNFRAKSPYEP</sequence>
<comment type="cofactor">
    <cofactor evidence="2">
        <name>Mn(2+)</name>
        <dbReference type="ChEBI" id="CHEBI:29035"/>
    </cofactor>
    <text evidence="2">Binds 2 manganese ions per subunit.</text>
</comment>
<comment type="similarity">
    <text evidence="2">Belongs to the peptidase M24B family.</text>
</comment>
<proteinExistence type="inferred from homology"/>
<keyword id="KW-0378">Hydrolase</keyword>
<keyword id="KW-0464">Manganese</keyword>
<keyword id="KW-0479">Metal-binding</keyword>
<keyword id="KW-1185">Reference proteome</keyword>
<reference key="1">
    <citation type="journal article" date="2002" name="Nature">
        <title>The genome sequence of Schizosaccharomyces pombe.</title>
        <authorList>
            <person name="Wood V."/>
            <person name="Gwilliam R."/>
            <person name="Rajandream M.A."/>
            <person name="Lyne M.H."/>
            <person name="Lyne R."/>
            <person name="Stewart A."/>
            <person name="Sgouros J.G."/>
            <person name="Peat N."/>
            <person name="Hayles J."/>
            <person name="Baker S.G."/>
            <person name="Basham D."/>
            <person name="Bowman S."/>
            <person name="Brooks K."/>
            <person name="Brown D."/>
            <person name="Brown S."/>
            <person name="Chillingworth T."/>
            <person name="Churcher C.M."/>
            <person name="Collins M."/>
            <person name="Connor R."/>
            <person name="Cronin A."/>
            <person name="Davis P."/>
            <person name="Feltwell T."/>
            <person name="Fraser A."/>
            <person name="Gentles S."/>
            <person name="Goble A."/>
            <person name="Hamlin N."/>
            <person name="Harris D.E."/>
            <person name="Hidalgo J."/>
            <person name="Hodgson G."/>
            <person name="Holroyd S."/>
            <person name="Hornsby T."/>
            <person name="Howarth S."/>
            <person name="Huckle E.J."/>
            <person name="Hunt S."/>
            <person name="Jagels K."/>
            <person name="James K.D."/>
            <person name="Jones L."/>
            <person name="Jones M."/>
            <person name="Leather S."/>
            <person name="McDonald S."/>
            <person name="McLean J."/>
            <person name="Mooney P."/>
            <person name="Moule S."/>
            <person name="Mungall K.L."/>
            <person name="Murphy L.D."/>
            <person name="Niblett D."/>
            <person name="Odell C."/>
            <person name="Oliver K."/>
            <person name="O'Neil S."/>
            <person name="Pearson D."/>
            <person name="Quail M.A."/>
            <person name="Rabbinowitsch E."/>
            <person name="Rutherford K.M."/>
            <person name="Rutter S."/>
            <person name="Saunders D."/>
            <person name="Seeger K."/>
            <person name="Sharp S."/>
            <person name="Skelton J."/>
            <person name="Simmonds M.N."/>
            <person name="Squares R."/>
            <person name="Squares S."/>
            <person name="Stevens K."/>
            <person name="Taylor K."/>
            <person name="Taylor R.G."/>
            <person name="Tivey A."/>
            <person name="Walsh S.V."/>
            <person name="Warren T."/>
            <person name="Whitehead S."/>
            <person name="Woodward J.R."/>
            <person name="Volckaert G."/>
            <person name="Aert R."/>
            <person name="Robben J."/>
            <person name="Grymonprez B."/>
            <person name="Weltjens I."/>
            <person name="Vanstreels E."/>
            <person name="Rieger M."/>
            <person name="Schaefer M."/>
            <person name="Mueller-Auer S."/>
            <person name="Gabel C."/>
            <person name="Fuchs M."/>
            <person name="Duesterhoeft A."/>
            <person name="Fritzc C."/>
            <person name="Holzer E."/>
            <person name="Moestl D."/>
            <person name="Hilbert H."/>
            <person name="Borzym K."/>
            <person name="Langer I."/>
            <person name="Beck A."/>
            <person name="Lehrach H."/>
            <person name="Reinhardt R."/>
            <person name="Pohl T.M."/>
            <person name="Eger P."/>
            <person name="Zimmermann W."/>
            <person name="Wedler H."/>
            <person name="Wambutt R."/>
            <person name="Purnelle B."/>
            <person name="Goffeau A."/>
            <person name="Cadieu E."/>
            <person name="Dreano S."/>
            <person name="Gloux S."/>
            <person name="Lelaure V."/>
            <person name="Mottier S."/>
            <person name="Galibert F."/>
            <person name="Aves S.J."/>
            <person name="Xiang Z."/>
            <person name="Hunt C."/>
            <person name="Moore K."/>
            <person name="Hurst S.M."/>
            <person name="Lucas M."/>
            <person name="Rochet M."/>
            <person name="Gaillardin C."/>
            <person name="Tallada V.A."/>
            <person name="Garzon A."/>
            <person name="Thode G."/>
            <person name="Daga R.R."/>
            <person name="Cruzado L."/>
            <person name="Jimenez J."/>
            <person name="Sanchez M."/>
            <person name="del Rey F."/>
            <person name="Benito J."/>
            <person name="Dominguez A."/>
            <person name="Revuelta J.L."/>
            <person name="Moreno S."/>
            <person name="Armstrong J."/>
            <person name="Forsburg S.L."/>
            <person name="Cerutti L."/>
            <person name="Lowe T."/>
            <person name="McCombie W.R."/>
            <person name="Paulsen I."/>
            <person name="Potashkin J."/>
            <person name="Shpakovski G.V."/>
            <person name="Ussery D."/>
            <person name="Barrell B.G."/>
            <person name="Nurse P."/>
        </authorList>
    </citation>
    <scope>NUCLEOTIDE SEQUENCE [LARGE SCALE GENOMIC DNA]</scope>
    <source>
        <strain>972 / ATCC 24843</strain>
    </source>
</reference>
<evidence type="ECO:0000255" key="1"/>
<evidence type="ECO:0000305" key="2"/>
<organism>
    <name type="scientific">Schizosaccharomyces pombe (strain 972 / ATCC 24843)</name>
    <name type="common">Fission yeast</name>
    <dbReference type="NCBI Taxonomy" id="284812"/>
    <lineage>
        <taxon>Eukaryota</taxon>
        <taxon>Fungi</taxon>
        <taxon>Dikarya</taxon>
        <taxon>Ascomycota</taxon>
        <taxon>Taphrinomycotina</taxon>
        <taxon>Schizosaccharomycetes</taxon>
        <taxon>Schizosaccharomycetales</taxon>
        <taxon>Schizosaccharomycetaceae</taxon>
        <taxon>Schizosaccharomyces</taxon>
    </lineage>
</organism>
<dbReference type="EC" id="3.4.-.-"/>
<dbReference type="EMBL" id="CU329671">
    <property type="protein sequence ID" value="CAA20739.3"/>
    <property type="molecule type" value="Genomic_DNA"/>
</dbReference>
<dbReference type="PIR" id="T39750">
    <property type="entry name" value="T39750"/>
</dbReference>
<dbReference type="RefSeq" id="NP_596119.2">
    <property type="nucleotide sequence ID" value="NM_001022036.3"/>
</dbReference>
<dbReference type="SMR" id="Q9UUD8"/>
<dbReference type="BioGRID" id="277328">
    <property type="interactions" value="9"/>
</dbReference>
<dbReference type="STRING" id="284812.Q9UUD8"/>
<dbReference type="MEROPS" id="M24.A11"/>
<dbReference type="iPTMnet" id="Q9UUD8"/>
<dbReference type="PaxDb" id="4896-SPBC18A7.01.1"/>
<dbReference type="EnsemblFungi" id="SPBC18A7.01.1">
    <property type="protein sequence ID" value="SPBC18A7.01.1:pep"/>
    <property type="gene ID" value="SPBC18A7.01"/>
</dbReference>
<dbReference type="GeneID" id="2540809"/>
<dbReference type="KEGG" id="spo:2540809"/>
<dbReference type="PomBase" id="SPBC18A7.01"/>
<dbReference type="VEuPathDB" id="FungiDB:SPBC18A7.01"/>
<dbReference type="eggNOG" id="ENOG502RYZM">
    <property type="taxonomic scope" value="Eukaryota"/>
</dbReference>
<dbReference type="HOGENOM" id="CLU_017266_2_1_1"/>
<dbReference type="InParanoid" id="Q9UUD8"/>
<dbReference type="OMA" id="GLEMHEH"/>
<dbReference type="PhylomeDB" id="Q9UUD8"/>
<dbReference type="PRO" id="PR:Q9UUD8"/>
<dbReference type="Proteomes" id="UP000002485">
    <property type="component" value="Chromosome II"/>
</dbReference>
<dbReference type="GO" id="GO:0005783">
    <property type="term" value="C:endoplasmic reticulum"/>
    <property type="evidence" value="ECO:0007005"/>
    <property type="project" value="PomBase"/>
</dbReference>
<dbReference type="GO" id="GO:0005794">
    <property type="term" value="C:Golgi apparatus"/>
    <property type="evidence" value="ECO:0007005"/>
    <property type="project" value="PomBase"/>
</dbReference>
<dbReference type="GO" id="GO:0016805">
    <property type="term" value="F:dipeptidase activity"/>
    <property type="evidence" value="ECO:0000255"/>
    <property type="project" value="PomBase"/>
</dbReference>
<dbReference type="GO" id="GO:0046872">
    <property type="term" value="F:metal ion binding"/>
    <property type="evidence" value="ECO:0007669"/>
    <property type="project" value="UniProtKB-KW"/>
</dbReference>
<dbReference type="GO" id="GO:0070006">
    <property type="term" value="F:metalloaminopeptidase activity"/>
    <property type="evidence" value="ECO:0000318"/>
    <property type="project" value="GO_Central"/>
</dbReference>
<dbReference type="GO" id="GO:0006508">
    <property type="term" value="P:proteolysis"/>
    <property type="evidence" value="ECO:0000318"/>
    <property type="project" value="GO_Central"/>
</dbReference>
<dbReference type="Gene3D" id="3.90.230.10">
    <property type="entry name" value="Creatinase/methionine aminopeptidase superfamily"/>
    <property type="match status" value="1"/>
</dbReference>
<dbReference type="Gene3D" id="3.40.350.10">
    <property type="entry name" value="Creatinase/prolidase N-terminal domain"/>
    <property type="match status" value="1"/>
</dbReference>
<dbReference type="InterPro" id="IPR029149">
    <property type="entry name" value="Creatin/AminoP/Spt16_N"/>
</dbReference>
<dbReference type="InterPro" id="IPR036005">
    <property type="entry name" value="Creatinase/aminopeptidase-like"/>
</dbReference>
<dbReference type="InterPro" id="IPR000994">
    <property type="entry name" value="Pept_M24"/>
</dbReference>
<dbReference type="InterPro" id="IPR050659">
    <property type="entry name" value="Peptidase_M24B"/>
</dbReference>
<dbReference type="InterPro" id="IPR001131">
    <property type="entry name" value="Peptidase_M24B_aminopep-P_CS"/>
</dbReference>
<dbReference type="PANTHER" id="PTHR46112">
    <property type="entry name" value="AMINOPEPTIDASE"/>
    <property type="match status" value="1"/>
</dbReference>
<dbReference type="PANTHER" id="PTHR46112:SF2">
    <property type="entry name" value="XAA-PRO AMINOPEPTIDASE P-RELATED"/>
    <property type="match status" value="1"/>
</dbReference>
<dbReference type="Pfam" id="PF00557">
    <property type="entry name" value="Peptidase_M24"/>
    <property type="match status" value="1"/>
</dbReference>
<dbReference type="SUPFAM" id="SSF55920">
    <property type="entry name" value="Creatinase/aminopeptidase"/>
    <property type="match status" value="1"/>
</dbReference>
<dbReference type="SUPFAM" id="SSF53092">
    <property type="entry name" value="Creatinase/prolidase N-terminal domain"/>
    <property type="match status" value="1"/>
</dbReference>
<dbReference type="PROSITE" id="PS00491">
    <property type="entry name" value="PROLINE_PEPTIDASE"/>
    <property type="match status" value="1"/>
</dbReference>
<feature type="chain" id="PRO_0000185097" description="Uncharacterized peptidase C18A7.01">
    <location>
        <begin position="1"/>
        <end position="451"/>
    </location>
</feature>
<feature type="binding site" evidence="1">
    <location>
        <position position="305"/>
    </location>
    <ligand>
        <name>Mn(2+)</name>
        <dbReference type="ChEBI" id="CHEBI:29035"/>
        <label>2</label>
    </ligand>
</feature>
<feature type="binding site" evidence="1">
    <location>
        <position position="316"/>
    </location>
    <ligand>
        <name>Mn(2+)</name>
        <dbReference type="ChEBI" id="CHEBI:29035"/>
        <label>1</label>
    </ligand>
</feature>
<feature type="binding site" evidence="1">
    <location>
        <position position="316"/>
    </location>
    <ligand>
        <name>Mn(2+)</name>
        <dbReference type="ChEBI" id="CHEBI:29035"/>
        <label>2</label>
    </ligand>
</feature>
<feature type="binding site" evidence="1">
    <location>
        <position position="384"/>
    </location>
    <ligand>
        <name>Mn(2+)</name>
        <dbReference type="ChEBI" id="CHEBI:29035"/>
        <label>1</label>
    </ligand>
</feature>
<feature type="binding site" evidence="1">
    <location>
        <position position="414"/>
    </location>
    <ligand>
        <name>Mn(2+)</name>
        <dbReference type="ChEBI" id="CHEBI:29035"/>
        <label>1</label>
    </ligand>
</feature>
<feature type="binding site" evidence="1">
    <location>
        <position position="428"/>
    </location>
    <ligand>
        <name>Mn(2+)</name>
        <dbReference type="ChEBI" id="CHEBI:29035"/>
        <label>1</label>
    </ligand>
</feature>
<feature type="binding site" evidence="1">
    <location>
        <position position="428"/>
    </location>
    <ligand>
        <name>Mn(2+)</name>
        <dbReference type="ChEBI" id="CHEBI:29035"/>
        <label>2</label>
    </ligand>
</feature>